<evidence type="ECO:0000255" key="1">
    <source>
        <dbReference type="HAMAP-Rule" id="MF_00451"/>
    </source>
</evidence>
<accession>A7H537</accession>
<comment type="function">
    <text evidence="1">Major role in the synthesis of nucleoside triphosphates other than ATP. The ATP gamma phosphate is transferred to the NDP beta phosphate via a ping-pong mechanism, using a phosphorylated active-site intermediate.</text>
</comment>
<comment type="catalytic activity">
    <reaction evidence="1">
        <text>a 2'-deoxyribonucleoside 5'-diphosphate + ATP = a 2'-deoxyribonucleoside 5'-triphosphate + ADP</text>
        <dbReference type="Rhea" id="RHEA:44640"/>
        <dbReference type="ChEBI" id="CHEBI:30616"/>
        <dbReference type="ChEBI" id="CHEBI:61560"/>
        <dbReference type="ChEBI" id="CHEBI:73316"/>
        <dbReference type="ChEBI" id="CHEBI:456216"/>
        <dbReference type="EC" id="2.7.4.6"/>
    </reaction>
</comment>
<comment type="catalytic activity">
    <reaction evidence="1">
        <text>a ribonucleoside 5'-diphosphate + ATP = a ribonucleoside 5'-triphosphate + ADP</text>
        <dbReference type="Rhea" id="RHEA:18113"/>
        <dbReference type="ChEBI" id="CHEBI:30616"/>
        <dbReference type="ChEBI" id="CHEBI:57930"/>
        <dbReference type="ChEBI" id="CHEBI:61557"/>
        <dbReference type="ChEBI" id="CHEBI:456216"/>
        <dbReference type="EC" id="2.7.4.6"/>
    </reaction>
</comment>
<comment type="cofactor">
    <cofactor evidence="1">
        <name>Mg(2+)</name>
        <dbReference type="ChEBI" id="CHEBI:18420"/>
    </cofactor>
</comment>
<comment type="subunit">
    <text evidence="1">Homotetramer.</text>
</comment>
<comment type="subcellular location">
    <subcellularLocation>
        <location evidence="1">Cytoplasm</location>
    </subcellularLocation>
</comment>
<comment type="similarity">
    <text evidence="1">Belongs to the NDK family.</text>
</comment>
<dbReference type="EC" id="2.7.4.6" evidence="1"/>
<dbReference type="EMBL" id="CP000768">
    <property type="protein sequence ID" value="ABS44073.1"/>
    <property type="molecule type" value="Genomic_DNA"/>
</dbReference>
<dbReference type="SMR" id="A7H537"/>
<dbReference type="KEGG" id="cjd:JJD26997_1626"/>
<dbReference type="HOGENOM" id="CLU_060216_8_1_7"/>
<dbReference type="Proteomes" id="UP000002302">
    <property type="component" value="Chromosome"/>
</dbReference>
<dbReference type="GO" id="GO:0005737">
    <property type="term" value="C:cytoplasm"/>
    <property type="evidence" value="ECO:0007669"/>
    <property type="project" value="UniProtKB-SubCell"/>
</dbReference>
<dbReference type="GO" id="GO:0005524">
    <property type="term" value="F:ATP binding"/>
    <property type="evidence" value="ECO:0007669"/>
    <property type="project" value="UniProtKB-UniRule"/>
</dbReference>
<dbReference type="GO" id="GO:0046872">
    <property type="term" value="F:metal ion binding"/>
    <property type="evidence" value="ECO:0007669"/>
    <property type="project" value="UniProtKB-KW"/>
</dbReference>
<dbReference type="GO" id="GO:0004550">
    <property type="term" value="F:nucleoside diphosphate kinase activity"/>
    <property type="evidence" value="ECO:0007669"/>
    <property type="project" value="UniProtKB-UniRule"/>
</dbReference>
<dbReference type="GO" id="GO:0006241">
    <property type="term" value="P:CTP biosynthetic process"/>
    <property type="evidence" value="ECO:0007669"/>
    <property type="project" value="UniProtKB-UniRule"/>
</dbReference>
<dbReference type="GO" id="GO:0006183">
    <property type="term" value="P:GTP biosynthetic process"/>
    <property type="evidence" value="ECO:0007669"/>
    <property type="project" value="UniProtKB-UniRule"/>
</dbReference>
<dbReference type="GO" id="GO:0006228">
    <property type="term" value="P:UTP biosynthetic process"/>
    <property type="evidence" value="ECO:0007669"/>
    <property type="project" value="UniProtKB-UniRule"/>
</dbReference>
<dbReference type="CDD" id="cd04413">
    <property type="entry name" value="NDPk_I"/>
    <property type="match status" value="1"/>
</dbReference>
<dbReference type="FunFam" id="3.30.70.141:FF:000001">
    <property type="entry name" value="Nucleoside diphosphate kinase"/>
    <property type="match status" value="1"/>
</dbReference>
<dbReference type="Gene3D" id="3.30.70.141">
    <property type="entry name" value="Nucleoside diphosphate kinase-like domain"/>
    <property type="match status" value="1"/>
</dbReference>
<dbReference type="HAMAP" id="MF_00451">
    <property type="entry name" value="NDP_kinase"/>
    <property type="match status" value="1"/>
</dbReference>
<dbReference type="InterPro" id="IPR034907">
    <property type="entry name" value="NDK-like_dom"/>
</dbReference>
<dbReference type="InterPro" id="IPR036850">
    <property type="entry name" value="NDK-like_dom_sf"/>
</dbReference>
<dbReference type="InterPro" id="IPR001564">
    <property type="entry name" value="Nucleoside_diP_kinase"/>
</dbReference>
<dbReference type="InterPro" id="IPR023005">
    <property type="entry name" value="Nucleoside_diP_kinase_AS"/>
</dbReference>
<dbReference type="NCBIfam" id="NF001908">
    <property type="entry name" value="PRK00668.1"/>
    <property type="match status" value="1"/>
</dbReference>
<dbReference type="PANTHER" id="PTHR46161">
    <property type="entry name" value="NUCLEOSIDE DIPHOSPHATE KINASE"/>
    <property type="match status" value="1"/>
</dbReference>
<dbReference type="PANTHER" id="PTHR46161:SF3">
    <property type="entry name" value="NUCLEOSIDE DIPHOSPHATE KINASE DDB_G0292928-RELATED"/>
    <property type="match status" value="1"/>
</dbReference>
<dbReference type="Pfam" id="PF00334">
    <property type="entry name" value="NDK"/>
    <property type="match status" value="1"/>
</dbReference>
<dbReference type="PRINTS" id="PR01243">
    <property type="entry name" value="NUCDPKINASE"/>
</dbReference>
<dbReference type="SMART" id="SM00562">
    <property type="entry name" value="NDK"/>
    <property type="match status" value="1"/>
</dbReference>
<dbReference type="SUPFAM" id="SSF54919">
    <property type="entry name" value="Nucleoside diphosphate kinase, NDK"/>
    <property type="match status" value="1"/>
</dbReference>
<dbReference type="PROSITE" id="PS00469">
    <property type="entry name" value="NDPK"/>
    <property type="match status" value="1"/>
</dbReference>
<dbReference type="PROSITE" id="PS51374">
    <property type="entry name" value="NDPK_LIKE"/>
    <property type="match status" value="1"/>
</dbReference>
<keyword id="KW-0067">ATP-binding</keyword>
<keyword id="KW-0963">Cytoplasm</keyword>
<keyword id="KW-0418">Kinase</keyword>
<keyword id="KW-0460">Magnesium</keyword>
<keyword id="KW-0479">Metal-binding</keyword>
<keyword id="KW-0546">Nucleotide metabolism</keyword>
<keyword id="KW-0547">Nucleotide-binding</keyword>
<keyword id="KW-0597">Phosphoprotein</keyword>
<keyword id="KW-0808">Transferase</keyword>
<gene>
    <name evidence="1" type="primary">ndk</name>
    <name type="ordered locus">JJD26997_1626</name>
</gene>
<name>NDK_CAMJD</name>
<reference key="1">
    <citation type="submission" date="2007-07" db="EMBL/GenBank/DDBJ databases">
        <title>Complete genome sequence of Campylobacter jejuni subsp doylei 269.97 isolated from human blood.</title>
        <authorList>
            <person name="Fouts D.E."/>
            <person name="Mongodin E.F."/>
            <person name="Puiu D."/>
            <person name="Sebastian Y."/>
            <person name="Miller W.G."/>
            <person name="Mandrell R.E."/>
            <person name="Lastovica A.J."/>
            <person name="Nelson K.E."/>
        </authorList>
    </citation>
    <scope>NUCLEOTIDE SEQUENCE [LARGE SCALE GENOMIC DNA]</scope>
    <source>
        <strain>ATCC BAA-1458 / RM4099 / 269.97</strain>
    </source>
</reference>
<feature type="chain" id="PRO_1000026224" description="Nucleoside diphosphate kinase">
    <location>
        <begin position="1"/>
        <end position="137"/>
    </location>
</feature>
<feature type="active site" description="Pros-phosphohistidine intermediate" evidence="1">
    <location>
        <position position="115"/>
    </location>
</feature>
<feature type="binding site" evidence="1">
    <location>
        <position position="9"/>
    </location>
    <ligand>
        <name>ATP</name>
        <dbReference type="ChEBI" id="CHEBI:30616"/>
    </ligand>
</feature>
<feature type="binding site" evidence="1">
    <location>
        <position position="57"/>
    </location>
    <ligand>
        <name>ATP</name>
        <dbReference type="ChEBI" id="CHEBI:30616"/>
    </ligand>
</feature>
<feature type="binding site" evidence="1">
    <location>
        <position position="85"/>
    </location>
    <ligand>
        <name>ATP</name>
        <dbReference type="ChEBI" id="CHEBI:30616"/>
    </ligand>
</feature>
<feature type="binding site" evidence="1">
    <location>
        <position position="91"/>
    </location>
    <ligand>
        <name>ATP</name>
        <dbReference type="ChEBI" id="CHEBI:30616"/>
    </ligand>
</feature>
<feature type="binding site" evidence="1">
    <location>
        <position position="102"/>
    </location>
    <ligand>
        <name>ATP</name>
        <dbReference type="ChEBI" id="CHEBI:30616"/>
    </ligand>
</feature>
<feature type="binding site" evidence="1">
    <location>
        <position position="112"/>
    </location>
    <ligand>
        <name>ATP</name>
        <dbReference type="ChEBI" id="CHEBI:30616"/>
    </ligand>
</feature>
<proteinExistence type="inferred from homology"/>
<sequence length="137" mass="15188">MEKTLSIIKPDAVKKGVIGKILDRFESNGLRIAAMKKVQLSKEQAENFYAVHKERPFFKDLVEFMISGPVVVSVLEGEGAVLKNRDLMGATNPKEAKAGTIRADFAESIDANAVHGSDSLENAKIEIEFFFKPNEIY</sequence>
<organism>
    <name type="scientific">Campylobacter jejuni subsp. doylei (strain ATCC BAA-1458 / RM4099 / 269.97)</name>
    <dbReference type="NCBI Taxonomy" id="360109"/>
    <lineage>
        <taxon>Bacteria</taxon>
        <taxon>Pseudomonadati</taxon>
        <taxon>Campylobacterota</taxon>
        <taxon>Epsilonproteobacteria</taxon>
        <taxon>Campylobacterales</taxon>
        <taxon>Campylobacteraceae</taxon>
        <taxon>Campylobacter</taxon>
    </lineage>
</organism>
<protein>
    <recommendedName>
        <fullName evidence="1">Nucleoside diphosphate kinase</fullName>
        <shortName evidence="1">NDK</shortName>
        <shortName evidence="1">NDP kinase</shortName>
        <ecNumber evidence="1">2.7.4.6</ecNumber>
    </recommendedName>
    <alternativeName>
        <fullName evidence="1">Nucleoside-2-P kinase</fullName>
    </alternativeName>
</protein>